<protein>
    <recommendedName>
        <fullName evidence="1">Co-chaperone protein DjlA</fullName>
    </recommendedName>
</protein>
<proteinExistence type="inferred from homology"/>
<keyword id="KW-0997">Cell inner membrane</keyword>
<keyword id="KW-1003">Cell membrane</keyword>
<keyword id="KW-0143">Chaperone</keyword>
<keyword id="KW-0472">Membrane</keyword>
<keyword id="KW-1185">Reference proteome</keyword>
<keyword id="KW-0812">Transmembrane</keyword>
<keyword id="KW-1133">Transmembrane helix</keyword>
<gene>
    <name evidence="1" type="primary">djlA</name>
    <name type="ordered locus">YPO0496</name>
    <name type="ordered locus">y3679</name>
    <name type="ordered locus">YP_3683</name>
</gene>
<evidence type="ECO:0000255" key="1">
    <source>
        <dbReference type="HAMAP-Rule" id="MF_01153"/>
    </source>
</evidence>
<reference key="1">
    <citation type="journal article" date="2001" name="Nature">
        <title>Genome sequence of Yersinia pestis, the causative agent of plague.</title>
        <authorList>
            <person name="Parkhill J."/>
            <person name="Wren B.W."/>
            <person name="Thomson N.R."/>
            <person name="Titball R.W."/>
            <person name="Holden M.T.G."/>
            <person name="Prentice M.B."/>
            <person name="Sebaihia M."/>
            <person name="James K.D."/>
            <person name="Churcher C.M."/>
            <person name="Mungall K.L."/>
            <person name="Baker S."/>
            <person name="Basham D."/>
            <person name="Bentley S.D."/>
            <person name="Brooks K."/>
            <person name="Cerdeno-Tarraga A.-M."/>
            <person name="Chillingworth T."/>
            <person name="Cronin A."/>
            <person name="Davies R.M."/>
            <person name="Davis P."/>
            <person name="Dougan G."/>
            <person name="Feltwell T."/>
            <person name="Hamlin N."/>
            <person name="Holroyd S."/>
            <person name="Jagels K."/>
            <person name="Karlyshev A.V."/>
            <person name="Leather S."/>
            <person name="Moule S."/>
            <person name="Oyston P.C.F."/>
            <person name="Quail M.A."/>
            <person name="Rutherford K.M."/>
            <person name="Simmonds M."/>
            <person name="Skelton J."/>
            <person name="Stevens K."/>
            <person name="Whitehead S."/>
            <person name="Barrell B.G."/>
        </authorList>
    </citation>
    <scope>NUCLEOTIDE SEQUENCE [LARGE SCALE GENOMIC DNA]</scope>
    <source>
        <strain>CO-92 / Biovar Orientalis</strain>
    </source>
</reference>
<reference key="2">
    <citation type="journal article" date="2002" name="J. Bacteriol.">
        <title>Genome sequence of Yersinia pestis KIM.</title>
        <authorList>
            <person name="Deng W."/>
            <person name="Burland V."/>
            <person name="Plunkett G. III"/>
            <person name="Boutin A."/>
            <person name="Mayhew G.F."/>
            <person name="Liss P."/>
            <person name="Perna N.T."/>
            <person name="Rose D.J."/>
            <person name="Mau B."/>
            <person name="Zhou S."/>
            <person name="Schwartz D.C."/>
            <person name="Fetherston J.D."/>
            <person name="Lindler L.E."/>
            <person name="Brubaker R.R."/>
            <person name="Plano G.V."/>
            <person name="Straley S.C."/>
            <person name="McDonough K.A."/>
            <person name="Nilles M.L."/>
            <person name="Matson J.S."/>
            <person name="Blattner F.R."/>
            <person name="Perry R.D."/>
        </authorList>
    </citation>
    <scope>NUCLEOTIDE SEQUENCE [LARGE SCALE GENOMIC DNA]</scope>
    <source>
        <strain>KIM10+ / Biovar Mediaevalis</strain>
    </source>
</reference>
<reference key="3">
    <citation type="journal article" date="2004" name="DNA Res.">
        <title>Complete genome sequence of Yersinia pestis strain 91001, an isolate avirulent to humans.</title>
        <authorList>
            <person name="Song Y."/>
            <person name="Tong Z."/>
            <person name="Wang J."/>
            <person name="Wang L."/>
            <person name="Guo Z."/>
            <person name="Han Y."/>
            <person name="Zhang J."/>
            <person name="Pei D."/>
            <person name="Zhou D."/>
            <person name="Qin H."/>
            <person name="Pang X."/>
            <person name="Han Y."/>
            <person name="Zhai J."/>
            <person name="Li M."/>
            <person name="Cui B."/>
            <person name="Qi Z."/>
            <person name="Jin L."/>
            <person name="Dai R."/>
            <person name="Chen F."/>
            <person name="Li S."/>
            <person name="Ye C."/>
            <person name="Du Z."/>
            <person name="Lin W."/>
            <person name="Wang J."/>
            <person name="Yu J."/>
            <person name="Yang H."/>
            <person name="Wang J."/>
            <person name="Huang P."/>
            <person name="Yang R."/>
        </authorList>
    </citation>
    <scope>NUCLEOTIDE SEQUENCE [LARGE SCALE GENOMIC DNA]</scope>
    <source>
        <strain>91001 / Biovar Mediaevalis</strain>
    </source>
</reference>
<name>DJLA_YERPE</name>
<sequence length="277" mass="31065">MRYWGKLLGLVLGVMYAPGVVGALLGLLVGHMVDRALGAKRRGFFADQQTRQSLFFRTTFQVMGHLTKAKGRVTEVDIQLASQLMDRMQLHGAARTAAQQAFREGKESHFPLRKALQEFRRVCFGRFDLIRIFLEIQLQAAFADGSLHPNERQVLYVIAEELGISRGQFDQFLRMFDGGRQFGGHGGWQGQQGGYSQSGYQRASQGPTLEDACKVLGVNSSDDSVAIKRAYRKLMGEHHPDKLVAKGLPPEMMEMAKQKAQEIQAAYDLIKREKGFK</sequence>
<dbReference type="EMBL" id="AL590842">
    <property type="protein sequence ID" value="CAL19176.1"/>
    <property type="molecule type" value="Genomic_DNA"/>
</dbReference>
<dbReference type="EMBL" id="AE009952">
    <property type="protein sequence ID" value="AAM87227.1"/>
    <property type="molecule type" value="Genomic_DNA"/>
</dbReference>
<dbReference type="EMBL" id="AE017042">
    <property type="protein sequence ID" value="AAS63831.1"/>
    <property type="molecule type" value="Genomic_DNA"/>
</dbReference>
<dbReference type="PIR" id="AF0061">
    <property type="entry name" value="AF0061"/>
</dbReference>
<dbReference type="RefSeq" id="WP_002210486.1">
    <property type="nucleotide sequence ID" value="NZ_WUCM01000024.1"/>
</dbReference>
<dbReference type="RefSeq" id="YP_002345569.1">
    <property type="nucleotide sequence ID" value="NC_003143.1"/>
</dbReference>
<dbReference type="SMR" id="Q74Q30"/>
<dbReference type="STRING" id="214092.YPO0496"/>
<dbReference type="PaxDb" id="214092-YPO0496"/>
<dbReference type="DNASU" id="1148626"/>
<dbReference type="EnsemblBacteria" id="AAS63831">
    <property type="protein sequence ID" value="AAS63831"/>
    <property type="gene ID" value="YP_3683"/>
</dbReference>
<dbReference type="GeneID" id="57974114"/>
<dbReference type="KEGG" id="ype:YPO0496"/>
<dbReference type="KEGG" id="ypk:y3679"/>
<dbReference type="KEGG" id="ypm:YP_3683"/>
<dbReference type="PATRIC" id="fig|214092.21.peg.746"/>
<dbReference type="eggNOG" id="COG1076">
    <property type="taxonomic scope" value="Bacteria"/>
</dbReference>
<dbReference type="HOGENOM" id="CLU_066221_1_0_6"/>
<dbReference type="OMA" id="MQYWGKL"/>
<dbReference type="OrthoDB" id="9782583at2"/>
<dbReference type="Proteomes" id="UP000000815">
    <property type="component" value="Chromosome"/>
</dbReference>
<dbReference type="Proteomes" id="UP000001019">
    <property type="component" value="Chromosome"/>
</dbReference>
<dbReference type="Proteomes" id="UP000002490">
    <property type="component" value="Chromosome"/>
</dbReference>
<dbReference type="GO" id="GO:0005886">
    <property type="term" value="C:plasma membrane"/>
    <property type="evidence" value="ECO:0007669"/>
    <property type="project" value="UniProtKB-SubCell"/>
</dbReference>
<dbReference type="GO" id="GO:0051087">
    <property type="term" value="F:protein-folding chaperone binding"/>
    <property type="evidence" value="ECO:0007669"/>
    <property type="project" value="InterPro"/>
</dbReference>
<dbReference type="CDD" id="cd06257">
    <property type="entry name" value="DnaJ"/>
    <property type="match status" value="1"/>
</dbReference>
<dbReference type="CDD" id="cd07316">
    <property type="entry name" value="terB_like_DjlA"/>
    <property type="match status" value="1"/>
</dbReference>
<dbReference type="FunFam" id="1.10.287.110:FF:000011">
    <property type="entry name" value="Co-chaperone protein DjlA"/>
    <property type="match status" value="1"/>
</dbReference>
<dbReference type="FunFam" id="1.10.3680.10:FF:000001">
    <property type="entry name" value="Co-chaperone protein DjlA"/>
    <property type="match status" value="1"/>
</dbReference>
<dbReference type="Gene3D" id="1.10.287.110">
    <property type="entry name" value="DnaJ domain"/>
    <property type="match status" value="1"/>
</dbReference>
<dbReference type="Gene3D" id="1.10.3680.10">
    <property type="entry name" value="TerB-like"/>
    <property type="match status" value="1"/>
</dbReference>
<dbReference type="HAMAP" id="MF_01153">
    <property type="entry name" value="DjlA"/>
    <property type="match status" value="1"/>
</dbReference>
<dbReference type="InterPro" id="IPR023749">
    <property type="entry name" value="DjlA"/>
</dbReference>
<dbReference type="InterPro" id="IPR050817">
    <property type="entry name" value="DjlA_DnaK_co-chaperone"/>
</dbReference>
<dbReference type="InterPro" id="IPR007791">
    <property type="entry name" value="DjlA_N"/>
</dbReference>
<dbReference type="InterPro" id="IPR001623">
    <property type="entry name" value="DnaJ_domain"/>
</dbReference>
<dbReference type="InterPro" id="IPR036869">
    <property type="entry name" value="J_dom_sf"/>
</dbReference>
<dbReference type="InterPro" id="IPR029024">
    <property type="entry name" value="TerB-like"/>
</dbReference>
<dbReference type="NCBIfam" id="NF006948">
    <property type="entry name" value="PRK09430.1"/>
    <property type="match status" value="1"/>
</dbReference>
<dbReference type="PANTHER" id="PTHR24074">
    <property type="entry name" value="CO-CHAPERONE PROTEIN DJLA"/>
    <property type="match status" value="1"/>
</dbReference>
<dbReference type="Pfam" id="PF00226">
    <property type="entry name" value="DnaJ"/>
    <property type="match status" value="1"/>
</dbReference>
<dbReference type="Pfam" id="PF05099">
    <property type="entry name" value="TerB"/>
    <property type="match status" value="1"/>
</dbReference>
<dbReference type="PRINTS" id="PR00625">
    <property type="entry name" value="JDOMAIN"/>
</dbReference>
<dbReference type="SMART" id="SM00271">
    <property type="entry name" value="DnaJ"/>
    <property type="match status" value="1"/>
</dbReference>
<dbReference type="SUPFAM" id="SSF46565">
    <property type="entry name" value="Chaperone J-domain"/>
    <property type="match status" value="1"/>
</dbReference>
<dbReference type="PROSITE" id="PS50076">
    <property type="entry name" value="DNAJ_2"/>
    <property type="match status" value="1"/>
</dbReference>
<feature type="chain" id="PRO_0000209445" description="Co-chaperone protein DjlA">
    <location>
        <begin position="1"/>
        <end position="277"/>
    </location>
</feature>
<feature type="topological domain" description="Periplasmic" evidence="1">
    <location>
        <begin position="1"/>
        <end position="6"/>
    </location>
</feature>
<feature type="transmembrane region" description="Helical" evidence="1">
    <location>
        <begin position="7"/>
        <end position="31"/>
    </location>
</feature>
<feature type="topological domain" description="Cytoplasmic" evidence="1">
    <location>
        <begin position="32"/>
        <end position="277"/>
    </location>
</feature>
<feature type="domain" description="J" evidence="1">
    <location>
        <begin position="211"/>
        <end position="277"/>
    </location>
</feature>
<accession>Q74Q30</accession>
<accession>Q0WJG9</accession>
<accession>Q7CG88</accession>
<accession>Q8ZIK2</accession>
<comment type="function">
    <text evidence="1">Regulatory DnaK co-chaperone. Direct interaction between DnaK and DjlA is needed for the induction of the wcaABCDE operon, involved in the synthesis of a colanic acid polysaccharide capsule, possibly through activation of the RcsB/RcsC phosphotransfer signaling pathway. The colanic acid capsule may help the bacterium survive conditions outside the host.</text>
</comment>
<comment type="subunit">
    <text evidence="1">Homodimer.</text>
</comment>
<comment type="subcellular location">
    <subcellularLocation>
        <location evidence="1">Cell inner membrane</location>
        <topology evidence="1">Single-pass type III membrane protein</topology>
    </subcellularLocation>
</comment>
<comment type="domain">
    <text evidence="1">The transmembrane domain is a dimerization domain.</text>
</comment>
<organism>
    <name type="scientific">Yersinia pestis</name>
    <dbReference type="NCBI Taxonomy" id="632"/>
    <lineage>
        <taxon>Bacteria</taxon>
        <taxon>Pseudomonadati</taxon>
        <taxon>Pseudomonadota</taxon>
        <taxon>Gammaproteobacteria</taxon>
        <taxon>Enterobacterales</taxon>
        <taxon>Yersiniaceae</taxon>
        <taxon>Yersinia</taxon>
    </lineage>
</organism>